<evidence type="ECO:0000250" key="1">
    <source>
        <dbReference type="UniProtKB" id="P82617"/>
    </source>
</evidence>
<evidence type="ECO:0000255" key="2"/>
<evidence type="ECO:0000269" key="3">
    <source>
    </source>
</evidence>
<evidence type="ECO:0000303" key="4">
    <source>
    </source>
</evidence>
<evidence type="ECO:0000305" key="5"/>
<protein>
    <recommendedName>
        <fullName evidence="1">Pyrokinin-5</fullName>
    </recommendedName>
    <alternativeName>
        <fullName evidence="1">FXPRL-amide</fullName>
    </alternativeName>
    <alternativeName>
        <fullName evidence="4">PerBr-Capa-PK</fullName>
    </alternativeName>
</protein>
<feature type="peptide" id="PRO_0000378711" description="Pyrokinin-5" evidence="3">
    <location>
        <begin position="1"/>
        <end position="17"/>
    </location>
</feature>
<feature type="modified residue" description="Leucine amide" evidence="3">
    <location>
        <position position="17"/>
    </location>
</feature>
<reference evidence="5" key="1">
    <citation type="journal article" date="2009" name="BMC Evol. Biol.">
        <title>A proteomic approach for studying insect phylogeny: CAPA peptides of ancient insect taxa (Dictyoptera, Blattoptera) as a test case.</title>
        <authorList>
            <person name="Roth S."/>
            <person name="Fromm B."/>
            <person name="Gaede G."/>
            <person name="Predel R."/>
        </authorList>
    </citation>
    <scope>PROTEIN SEQUENCE</scope>
    <scope>AMIDATION AT LEU-17</scope>
    <source>
        <tissue evidence="3">Abdominal perisympathetic organs</tissue>
    </source>
</reference>
<proteinExistence type="evidence at protein level"/>
<dbReference type="GO" id="GO:0005576">
    <property type="term" value="C:extracellular region"/>
    <property type="evidence" value="ECO:0007669"/>
    <property type="project" value="UniProtKB-SubCell"/>
</dbReference>
<dbReference type="GO" id="GO:0005184">
    <property type="term" value="F:neuropeptide hormone activity"/>
    <property type="evidence" value="ECO:0007669"/>
    <property type="project" value="InterPro"/>
</dbReference>
<dbReference type="GO" id="GO:0007218">
    <property type="term" value="P:neuropeptide signaling pathway"/>
    <property type="evidence" value="ECO:0007669"/>
    <property type="project" value="UniProtKB-KW"/>
</dbReference>
<dbReference type="InterPro" id="IPR001484">
    <property type="entry name" value="Pyrokinin_CS"/>
</dbReference>
<dbReference type="PROSITE" id="PS00539">
    <property type="entry name" value="PYROKININ"/>
    <property type="match status" value="1"/>
</dbReference>
<organism>
    <name type="scientific">Periplaneta brunnea</name>
    <name type="common">Brown cockroach</name>
    <dbReference type="NCBI Taxonomy" id="36976"/>
    <lineage>
        <taxon>Eukaryota</taxon>
        <taxon>Metazoa</taxon>
        <taxon>Ecdysozoa</taxon>
        <taxon>Arthropoda</taxon>
        <taxon>Hexapoda</taxon>
        <taxon>Insecta</taxon>
        <taxon>Pterygota</taxon>
        <taxon>Neoptera</taxon>
        <taxon>Polyneoptera</taxon>
        <taxon>Dictyoptera</taxon>
        <taxon>Blattodea</taxon>
        <taxon>Blattoidea</taxon>
        <taxon>Blattidae</taxon>
        <taxon>Blattinae</taxon>
        <taxon>Periplaneta</taxon>
    </lineage>
</organism>
<name>PPK5_PERBR</name>
<sequence>GGGGSGETSGMWFGPRL</sequence>
<comment type="function">
    <text evidence="1">Myoactive.</text>
</comment>
<comment type="subcellular location">
    <subcellularLocation>
        <location evidence="5">Secreted</location>
    </subcellularLocation>
</comment>
<comment type="similarity">
    <text evidence="2">Belongs to the pyrokinin family.</text>
</comment>
<accession>P85710</accession>
<keyword id="KW-0027">Amidation</keyword>
<keyword id="KW-0903">Direct protein sequencing</keyword>
<keyword id="KW-0527">Neuropeptide</keyword>
<keyword id="KW-0964">Secreted</keyword>